<comment type="function">
    <text evidence="6 7 8 12 13">PPIases accelerate the folding of proteins (Probable). It catalyzes the cis-trans isomerization of proline imidic peptide bonds in oligopeptides (PubMed:33098102). Histone proline isomerase that increases the rate of cis-trans isomerization of the synthetic histone H3 peptides H3P30 (RKSAP30F-p-nitroanilide) and H3P30K27me3 (RKme3-SAP30F-p-nitroanilide) in the histone H3 N-terminal tail, in vitro (PubMed:33098102). Histone remodeling factor involved in chromatin-based gene silencing (PubMed:17704213). Reinforces H3K27 methylation (PubMed:17704213). Involved in fundamental processes of chromatin assembly and histone modification by mediating the targeting of FAS1 and LHP1 on the chromatin (PubMed:21596687). Required for the formation and development of leaves, for normal phyllotaxy and for the formation, maintenance and activity of root and shoot apical meristems (PubMed:17704213).</text>
</comment>
<comment type="catalytic activity">
    <reaction evidence="8">
        <text>[protein]-peptidylproline (omega=180) = [protein]-peptidylproline (omega=0)</text>
        <dbReference type="Rhea" id="RHEA:16237"/>
        <dbReference type="Rhea" id="RHEA-COMP:10747"/>
        <dbReference type="Rhea" id="RHEA-COMP:10748"/>
        <dbReference type="ChEBI" id="CHEBI:83833"/>
        <dbReference type="ChEBI" id="CHEBI:83834"/>
        <dbReference type="EC" id="5.2.1.8"/>
    </reaction>
</comment>
<comment type="subunit">
    <text evidence="6 7">Interacts with FAS1 and LHP1 (PubMed:21596687). Interacts (via WD repeat domain) with histone H3 (PubMed:17704213).</text>
</comment>
<comment type="subcellular location">
    <subcellularLocation>
        <location evidence="6">Nucleus</location>
    </subcellularLocation>
</comment>
<comment type="tissue specificity">
    <text evidence="4 5 6">Ubiquitous. Expressed in the meristems.</text>
</comment>
<comment type="induction">
    <text evidence="4">Down-regulated by auxin treatment.</text>
</comment>
<comment type="disruption phenotype">
    <text evidence="6">Bushy and stunted stature.</text>
</comment>
<comment type="similarity">
    <text evidence="11">Belongs to the cyclophilin-type PPIase family.</text>
</comment>
<comment type="sequence caution" evidence="11">
    <conflict type="erroneous gene model prediction">
        <sequence resource="EMBL-CDS" id="CAB88542"/>
    </conflict>
</comment>
<dbReference type="EC" id="5.2.1.8" evidence="8"/>
<dbReference type="EMBL" id="AL353818">
    <property type="protein sequence ID" value="CAB88542.1"/>
    <property type="status" value="ALT_SEQ"/>
    <property type="molecule type" value="Genomic_DNA"/>
</dbReference>
<dbReference type="EMBL" id="CP002686">
    <property type="protein sequence ID" value="AEE77920.1"/>
    <property type="molecule type" value="Genomic_DNA"/>
</dbReference>
<dbReference type="EMBL" id="AY062653">
    <property type="protein sequence ID" value="AAL32731.1"/>
    <property type="molecule type" value="mRNA"/>
</dbReference>
<dbReference type="EMBL" id="BT008382">
    <property type="protein sequence ID" value="AAP37741.1"/>
    <property type="molecule type" value="mRNA"/>
</dbReference>
<dbReference type="PIR" id="T48940">
    <property type="entry name" value="T48940"/>
</dbReference>
<dbReference type="RefSeq" id="NP_190046.2">
    <property type="nucleotide sequence ID" value="NM_114328.4"/>
</dbReference>
<dbReference type="PDB" id="6LKB">
    <property type="method" value="X-ray"/>
    <property type="resolution" value="1.65 A"/>
    <property type="chains" value="A/B=469-628"/>
</dbReference>
<dbReference type="PDBsum" id="6LKB"/>
<dbReference type="SMR" id="Q8W4D0"/>
<dbReference type="BioGRID" id="8905">
    <property type="interactions" value="5"/>
</dbReference>
<dbReference type="FunCoup" id="Q8W4D0">
    <property type="interactions" value="4732"/>
</dbReference>
<dbReference type="STRING" id="3702.Q8W4D0"/>
<dbReference type="iPTMnet" id="Q8W4D0"/>
<dbReference type="PaxDb" id="3702-AT3G44600.1"/>
<dbReference type="ProteomicsDB" id="222617"/>
<dbReference type="EnsemblPlants" id="AT3G44600.1">
    <property type="protein sequence ID" value="AT3G44600.1"/>
    <property type="gene ID" value="AT3G44600"/>
</dbReference>
<dbReference type="GeneID" id="823585"/>
<dbReference type="Gramene" id="AT3G44600.1">
    <property type="protein sequence ID" value="AT3G44600.1"/>
    <property type="gene ID" value="AT3G44600"/>
</dbReference>
<dbReference type="KEGG" id="ath:AT3G44600"/>
<dbReference type="Araport" id="AT3G44600"/>
<dbReference type="TAIR" id="AT3G44600">
    <property type="gene designation" value="CYP71"/>
</dbReference>
<dbReference type="eggNOG" id="KOG0882">
    <property type="taxonomic scope" value="Eukaryota"/>
</dbReference>
<dbReference type="HOGENOM" id="CLU_012062_31_0_1"/>
<dbReference type="InParanoid" id="Q8W4D0"/>
<dbReference type="OMA" id="GMVEYWR"/>
<dbReference type="PhylomeDB" id="Q8W4D0"/>
<dbReference type="PRO" id="PR:Q8W4D0"/>
<dbReference type="Proteomes" id="UP000006548">
    <property type="component" value="Chromosome 3"/>
</dbReference>
<dbReference type="ExpressionAtlas" id="Q8W4D0">
    <property type="expression patterns" value="baseline and differential"/>
</dbReference>
<dbReference type="GO" id="GO:0005634">
    <property type="term" value="C:nucleus"/>
    <property type="evidence" value="ECO:0000314"/>
    <property type="project" value="TAIR"/>
</dbReference>
<dbReference type="GO" id="GO:0003682">
    <property type="term" value="F:chromatin binding"/>
    <property type="evidence" value="ECO:0000314"/>
    <property type="project" value="TAIR"/>
</dbReference>
<dbReference type="GO" id="GO:0042393">
    <property type="term" value="F:histone binding"/>
    <property type="evidence" value="ECO:0000314"/>
    <property type="project" value="TAIR"/>
</dbReference>
<dbReference type="GO" id="GO:0003755">
    <property type="term" value="F:peptidyl-prolyl cis-trans isomerase activity"/>
    <property type="evidence" value="ECO:0000314"/>
    <property type="project" value="UniProtKB"/>
</dbReference>
<dbReference type="GO" id="GO:0048440">
    <property type="term" value="P:carpel development"/>
    <property type="evidence" value="ECO:0000315"/>
    <property type="project" value="TAIR"/>
</dbReference>
<dbReference type="GO" id="GO:0006338">
    <property type="term" value="P:chromatin remodeling"/>
    <property type="evidence" value="ECO:0000314"/>
    <property type="project" value="UniProtKB"/>
</dbReference>
<dbReference type="GO" id="GO:0010338">
    <property type="term" value="P:leaf formation"/>
    <property type="evidence" value="ECO:0000315"/>
    <property type="project" value="TAIR"/>
</dbReference>
<dbReference type="GO" id="GO:0010358">
    <property type="term" value="P:leaf shaping"/>
    <property type="evidence" value="ECO:0000315"/>
    <property type="project" value="TAIR"/>
</dbReference>
<dbReference type="GO" id="GO:0010305">
    <property type="term" value="P:leaf vascular tissue pattern formation"/>
    <property type="evidence" value="ECO:0000315"/>
    <property type="project" value="TAIR"/>
</dbReference>
<dbReference type="GO" id="GO:0009933">
    <property type="term" value="P:meristem structural organization"/>
    <property type="evidence" value="ECO:0000315"/>
    <property type="project" value="TAIR"/>
</dbReference>
<dbReference type="GO" id="GO:0045814">
    <property type="term" value="P:negative regulation of gene expression, epigenetic"/>
    <property type="evidence" value="ECO:0000314"/>
    <property type="project" value="UniProtKB"/>
</dbReference>
<dbReference type="GO" id="GO:0009909">
    <property type="term" value="P:regulation of flower development"/>
    <property type="evidence" value="ECO:0000315"/>
    <property type="project" value="TAIR"/>
</dbReference>
<dbReference type="GO" id="GO:0010082">
    <property type="term" value="P:regulation of root meristem growth"/>
    <property type="evidence" value="ECO:0000315"/>
    <property type="project" value="TAIR"/>
</dbReference>
<dbReference type="GO" id="GO:0048453">
    <property type="term" value="P:sepal formation"/>
    <property type="evidence" value="ECO:0000315"/>
    <property type="project" value="TAIR"/>
</dbReference>
<dbReference type="GO" id="GO:0048443">
    <property type="term" value="P:stamen development"/>
    <property type="evidence" value="ECO:0000315"/>
    <property type="project" value="TAIR"/>
</dbReference>
<dbReference type="CDD" id="cd01927">
    <property type="entry name" value="cyclophilin_WD40"/>
    <property type="match status" value="1"/>
</dbReference>
<dbReference type="FunFam" id="2.40.100.10:FF:000003">
    <property type="entry name" value="Peptidylprolyl isomerase domain and WD repeat-containing 1"/>
    <property type="match status" value="1"/>
</dbReference>
<dbReference type="FunFam" id="2.130.10.10:FF:000450">
    <property type="entry name" value="Peptidylprolyl isomerase domain and WD-repeat protein 1"/>
    <property type="match status" value="1"/>
</dbReference>
<dbReference type="Gene3D" id="2.40.100.10">
    <property type="entry name" value="Cyclophilin-like"/>
    <property type="match status" value="1"/>
</dbReference>
<dbReference type="Gene3D" id="2.130.10.10">
    <property type="entry name" value="YVTN repeat-like/Quinoprotein amine dehydrogenase"/>
    <property type="match status" value="1"/>
</dbReference>
<dbReference type="InterPro" id="IPR029000">
    <property type="entry name" value="Cyclophilin-like_dom_sf"/>
</dbReference>
<dbReference type="InterPro" id="IPR002130">
    <property type="entry name" value="Cyclophilin-type_PPIase_dom"/>
</dbReference>
<dbReference type="InterPro" id="IPR044666">
    <property type="entry name" value="Cyclophilin_A-like"/>
</dbReference>
<dbReference type="InterPro" id="IPR015943">
    <property type="entry name" value="WD40/YVTN_repeat-like_dom_sf"/>
</dbReference>
<dbReference type="InterPro" id="IPR036322">
    <property type="entry name" value="WD40_repeat_dom_sf"/>
</dbReference>
<dbReference type="InterPro" id="IPR001680">
    <property type="entry name" value="WD40_rpt"/>
</dbReference>
<dbReference type="PANTHER" id="PTHR45625">
    <property type="entry name" value="PEPTIDYL-PROLYL CIS-TRANS ISOMERASE-RELATED"/>
    <property type="match status" value="1"/>
</dbReference>
<dbReference type="PANTHER" id="PTHR45625:SF4">
    <property type="entry name" value="PEPTIDYLPROLYL ISOMERASE DOMAIN AND WD REPEAT-CONTAINING PROTEIN 1"/>
    <property type="match status" value="1"/>
</dbReference>
<dbReference type="Pfam" id="PF00160">
    <property type="entry name" value="Pro_isomerase"/>
    <property type="match status" value="1"/>
</dbReference>
<dbReference type="Pfam" id="PF00400">
    <property type="entry name" value="WD40"/>
    <property type="match status" value="1"/>
</dbReference>
<dbReference type="PRINTS" id="PR00153">
    <property type="entry name" value="CSAPPISMRASE"/>
</dbReference>
<dbReference type="SMART" id="SM00320">
    <property type="entry name" value="WD40"/>
    <property type="match status" value="4"/>
</dbReference>
<dbReference type="SUPFAM" id="SSF50891">
    <property type="entry name" value="Cyclophilin-like"/>
    <property type="match status" value="1"/>
</dbReference>
<dbReference type="SUPFAM" id="SSF50978">
    <property type="entry name" value="WD40 repeat-like"/>
    <property type="match status" value="1"/>
</dbReference>
<dbReference type="PROSITE" id="PS50072">
    <property type="entry name" value="CSA_PPIASE_2"/>
    <property type="match status" value="1"/>
</dbReference>
<dbReference type="PROSITE" id="PS50294">
    <property type="entry name" value="WD_REPEATS_REGION"/>
    <property type="match status" value="1"/>
</dbReference>
<organism>
    <name type="scientific">Arabidopsis thaliana</name>
    <name type="common">Mouse-ear cress</name>
    <dbReference type="NCBI Taxonomy" id="3702"/>
    <lineage>
        <taxon>Eukaryota</taxon>
        <taxon>Viridiplantae</taxon>
        <taxon>Streptophyta</taxon>
        <taxon>Embryophyta</taxon>
        <taxon>Tracheophyta</taxon>
        <taxon>Spermatophyta</taxon>
        <taxon>Magnoliopsida</taxon>
        <taxon>eudicotyledons</taxon>
        <taxon>Gunneridae</taxon>
        <taxon>Pentapetalae</taxon>
        <taxon>rosids</taxon>
        <taxon>malvids</taxon>
        <taxon>Brassicales</taxon>
        <taxon>Brassicaceae</taxon>
        <taxon>Camelineae</taxon>
        <taxon>Arabidopsis</taxon>
    </lineage>
</organism>
<protein>
    <recommendedName>
        <fullName evidence="9">Peptidyl-prolyl cis-trans isomerase CYP71</fullName>
        <shortName evidence="9">PPIase CYP71</shortName>
        <ecNumber evidence="8">5.2.1.8</ecNumber>
    </recommendedName>
    <alternativeName>
        <fullName evidence="11">Cyclophilin of 71 kDa</fullName>
    </alternativeName>
    <alternativeName>
        <fullName evidence="10">Cyclophilin-71</fullName>
        <shortName evidence="9">AtCYP71</shortName>
    </alternativeName>
</protein>
<name>CPY71_ARATH</name>
<reference key="1">
    <citation type="journal article" date="2000" name="Nature">
        <title>Sequence and analysis of chromosome 3 of the plant Arabidopsis thaliana.</title>
        <authorList>
            <person name="Salanoubat M."/>
            <person name="Lemcke K."/>
            <person name="Rieger M."/>
            <person name="Ansorge W."/>
            <person name="Unseld M."/>
            <person name="Fartmann B."/>
            <person name="Valle G."/>
            <person name="Bloecker H."/>
            <person name="Perez-Alonso M."/>
            <person name="Obermaier B."/>
            <person name="Delseny M."/>
            <person name="Boutry M."/>
            <person name="Grivell L.A."/>
            <person name="Mache R."/>
            <person name="Puigdomenech P."/>
            <person name="De Simone V."/>
            <person name="Choisne N."/>
            <person name="Artiguenave F."/>
            <person name="Robert C."/>
            <person name="Brottier P."/>
            <person name="Wincker P."/>
            <person name="Cattolico L."/>
            <person name="Weissenbach J."/>
            <person name="Saurin W."/>
            <person name="Quetier F."/>
            <person name="Schaefer M."/>
            <person name="Mueller-Auer S."/>
            <person name="Gabel C."/>
            <person name="Fuchs M."/>
            <person name="Benes V."/>
            <person name="Wurmbach E."/>
            <person name="Drzonek H."/>
            <person name="Erfle H."/>
            <person name="Jordan N."/>
            <person name="Bangert S."/>
            <person name="Wiedelmann R."/>
            <person name="Kranz H."/>
            <person name="Voss H."/>
            <person name="Holland R."/>
            <person name="Brandt P."/>
            <person name="Nyakatura G."/>
            <person name="Vezzi A."/>
            <person name="D'Angelo M."/>
            <person name="Pallavicini A."/>
            <person name="Toppo S."/>
            <person name="Simionati B."/>
            <person name="Conrad A."/>
            <person name="Hornischer K."/>
            <person name="Kauer G."/>
            <person name="Loehnert T.-H."/>
            <person name="Nordsiek G."/>
            <person name="Reichelt J."/>
            <person name="Scharfe M."/>
            <person name="Schoen O."/>
            <person name="Bargues M."/>
            <person name="Terol J."/>
            <person name="Climent J."/>
            <person name="Navarro P."/>
            <person name="Collado C."/>
            <person name="Perez-Perez A."/>
            <person name="Ottenwaelder B."/>
            <person name="Duchemin D."/>
            <person name="Cooke R."/>
            <person name="Laudie M."/>
            <person name="Berger-Llauro C."/>
            <person name="Purnelle B."/>
            <person name="Masuy D."/>
            <person name="de Haan M."/>
            <person name="Maarse A.C."/>
            <person name="Alcaraz J.-P."/>
            <person name="Cottet A."/>
            <person name="Casacuberta E."/>
            <person name="Monfort A."/>
            <person name="Argiriou A."/>
            <person name="Flores M."/>
            <person name="Liguori R."/>
            <person name="Vitale D."/>
            <person name="Mannhaupt G."/>
            <person name="Haase D."/>
            <person name="Schoof H."/>
            <person name="Rudd S."/>
            <person name="Zaccaria P."/>
            <person name="Mewes H.-W."/>
            <person name="Mayer K.F.X."/>
            <person name="Kaul S."/>
            <person name="Town C.D."/>
            <person name="Koo H.L."/>
            <person name="Tallon L.J."/>
            <person name="Jenkins J."/>
            <person name="Rooney T."/>
            <person name="Rizzo M."/>
            <person name="Walts A."/>
            <person name="Utterback T."/>
            <person name="Fujii C.Y."/>
            <person name="Shea T.P."/>
            <person name="Creasy T.H."/>
            <person name="Haas B."/>
            <person name="Maiti R."/>
            <person name="Wu D."/>
            <person name="Peterson J."/>
            <person name="Van Aken S."/>
            <person name="Pai G."/>
            <person name="Militscher J."/>
            <person name="Sellers P."/>
            <person name="Gill J.E."/>
            <person name="Feldblyum T.V."/>
            <person name="Preuss D."/>
            <person name="Lin X."/>
            <person name="Nierman W.C."/>
            <person name="Salzberg S.L."/>
            <person name="White O."/>
            <person name="Venter J.C."/>
            <person name="Fraser C.M."/>
            <person name="Kaneko T."/>
            <person name="Nakamura Y."/>
            <person name="Sato S."/>
            <person name="Kato T."/>
            <person name="Asamizu E."/>
            <person name="Sasamoto S."/>
            <person name="Kimura T."/>
            <person name="Idesawa K."/>
            <person name="Kawashima K."/>
            <person name="Kishida Y."/>
            <person name="Kiyokawa C."/>
            <person name="Kohara M."/>
            <person name="Matsumoto M."/>
            <person name="Matsuno A."/>
            <person name="Muraki A."/>
            <person name="Nakayama S."/>
            <person name="Nakazaki N."/>
            <person name="Shinpo S."/>
            <person name="Takeuchi C."/>
            <person name="Wada T."/>
            <person name="Watanabe A."/>
            <person name="Yamada M."/>
            <person name="Yasuda M."/>
            <person name="Tabata S."/>
        </authorList>
    </citation>
    <scope>NUCLEOTIDE SEQUENCE [LARGE SCALE GENOMIC DNA]</scope>
    <source>
        <strain>cv. Columbia</strain>
    </source>
</reference>
<reference key="2">
    <citation type="journal article" date="2017" name="Plant J.">
        <title>Araport11: a complete reannotation of the Arabidopsis thaliana reference genome.</title>
        <authorList>
            <person name="Cheng C.Y."/>
            <person name="Krishnakumar V."/>
            <person name="Chan A.P."/>
            <person name="Thibaud-Nissen F."/>
            <person name="Schobel S."/>
            <person name="Town C.D."/>
        </authorList>
    </citation>
    <scope>GENOME REANNOTATION</scope>
    <source>
        <strain>cv. Columbia</strain>
    </source>
</reference>
<reference key="3">
    <citation type="journal article" date="2003" name="Science">
        <title>Empirical analysis of transcriptional activity in the Arabidopsis genome.</title>
        <authorList>
            <person name="Yamada K."/>
            <person name="Lim J."/>
            <person name="Dale J.M."/>
            <person name="Chen H."/>
            <person name="Shinn P."/>
            <person name="Palm C.J."/>
            <person name="Southwick A.M."/>
            <person name="Wu H.C."/>
            <person name="Kim C.J."/>
            <person name="Nguyen M."/>
            <person name="Pham P.K."/>
            <person name="Cheuk R.F."/>
            <person name="Karlin-Newmann G."/>
            <person name="Liu S.X."/>
            <person name="Lam B."/>
            <person name="Sakano H."/>
            <person name="Wu T."/>
            <person name="Yu G."/>
            <person name="Miranda M."/>
            <person name="Quach H.L."/>
            <person name="Tripp M."/>
            <person name="Chang C.H."/>
            <person name="Lee J.M."/>
            <person name="Toriumi M.J."/>
            <person name="Chan M.M."/>
            <person name="Tang C.C."/>
            <person name="Onodera C.S."/>
            <person name="Deng J.M."/>
            <person name="Akiyama K."/>
            <person name="Ansari Y."/>
            <person name="Arakawa T."/>
            <person name="Banh J."/>
            <person name="Banno F."/>
            <person name="Bowser L."/>
            <person name="Brooks S.Y."/>
            <person name="Carninci P."/>
            <person name="Chao Q."/>
            <person name="Choy N."/>
            <person name="Enju A."/>
            <person name="Goldsmith A.D."/>
            <person name="Gurjal M."/>
            <person name="Hansen N.F."/>
            <person name="Hayashizaki Y."/>
            <person name="Johnson-Hopson C."/>
            <person name="Hsuan V.W."/>
            <person name="Iida K."/>
            <person name="Karnes M."/>
            <person name="Khan S."/>
            <person name="Koesema E."/>
            <person name="Ishida J."/>
            <person name="Jiang P.X."/>
            <person name="Jones T."/>
            <person name="Kawai J."/>
            <person name="Kamiya A."/>
            <person name="Meyers C."/>
            <person name="Nakajima M."/>
            <person name="Narusaka M."/>
            <person name="Seki M."/>
            <person name="Sakurai T."/>
            <person name="Satou M."/>
            <person name="Tamse R."/>
            <person name="Vaysberg M."/>
            <person name="Wallender E.K."/>
            <person name="Wong C."/>
            <person name="Yamamura Y."/>
            <person name="Yuan S."/>
            <person name="Shinozaki K."/>
            <person name="Davis R.W."/>
            <person name="Theologis A."/>
            <person name="Ecker J.R."/>
        </authorList>
    </citation>
    <scope>NUCLEOTIDE SEQUENCE [LARGE SCALE MRNA]</scope>
    <source>
        <strain>cv. Columbia</strain>
    </source>
</reference>
<reference key="4">
    <citation type="journal article" date="2004" name="Plant Physiol.">
        <title>Immunophilins and parvulins. Superfamily of peptidyl prolyl isomerases in Arabidopsis.</title>
        <authorList>
            <person name="He Z."/>
            <person name="Li L."/>
            <person name="Luan S."/>
        </authorList>
    </citation>
    <scope>TISSUE SPECIFICITY</scope>
    <scope>GENE FAMILY</scope>
    <scope>NOMENCLATURE</scope>
    <scope>INDUCTION</scope>
</reference>
<reference key="5">
    <citation type="journal article" date="2004" name="Plant Physiol.">
        <title>The Arabidopsis cyclophilin gene family.</title>
        <authorList>
            <person name="Romano P.G.N."/>
            <person name="Horton P."/>
            <person name="Gray J.E."/>
        </authorList>
    </citation>
    <scope>TISSUE SPECIFICITY</scope>
    <scope>GENE FAMILY</scope>
    <scope>NOMENCLATURE</scope>
</reference>
<reference key="6">
    <citation type="journal article" date="2007" name="Plant Cell">
        <title>A WD40 domain cyclophilin interacts with histone H3 and functions in gene repression and organogenesis in Arabidopsis.</title>
        <authorList>
            <person name="Li H."/>
            <person name="He Z."/>
            <person name="Lu G."/>
            <person name="Lee S.C."/>
            <person name="Alonso J."/>
            <person name="Ecker J.R."/>
            <person name="Luan S."/>
        </authorList>
    </citation>
    <scope>FUNCTION</scope>
    <scope>DISRUPTION PHENOTYPE</scope>
    <scope>TISSUE SPECIFICITY</scope>
    <scope>SUBCELLULAR LOCATION</scope>
    <scope>INTERACTION WITH HISTONE H3</scope>
</reference>
<reference key="7">
    <citation type="journal article" date="2011" name="Mol. Plant">
        <title>The cyclophilin AtCYP71 interacts with CAF-1 and LHP1 and functions in multiple chromatin remodeling processes.</title>
        <authorList>
            <person name="Li H."/>
            <person name="Luan S."/>
        </authorList>
    </citation>
    <scope>FUNCTION</scope>
    <scope>INTERACTION WITH FAS1 AND LHP1</scope>
</reference>
<reference key="8">
    <citation type="journal article" date="2021" name="FEBS Lett.">
        <title>Structural and functional analyses of the PPIase domain of Arabidopsisthaliana CYP71 reveal its catalytic activity toward histone H3.</title>
        <authorList>
            <person name="Lakhanpal S."/>
            <person name="Fan J.S."/>
            <person name="Luan S."/>
            <person name="Swaminathan K."/>
        </authorList>
    </citation>
    <scope>X-RAY CRYSTALLOGRAPHY (1.65 ANGSTROMS) OF 469-628</scope>
    <scope>FUNCTION</scope>
    <scope>CATALYTIC ACTIVITY</scope>
</reference>
<sequence>MEEESKNGGTTIPTEELAVVAVPPVVEEEEPMVGPGPAPRGKRKRPLQFEQAYLDSLPSANMYEKSYMHRDVVTHVAVSAAEFFISGSMDGHLKFWKKKGVGIEFAKHFRSHLGPIEGLAVSIDGLLCCTISNDHAVKIYDVVNYDMMAMIRLPYIPGAVEWVYKQGDVKAKLAVSDRDSLFVHIYDPRSGSNEPIASKEIHMNPIKVMKYNPVSDTMISGDTKGIIEYWSATTLQFPEDEVNFKLKSDTNLFEIIKCKTTISAIEVSPDGKQFSITAPDRRIRVFWFRTGKLRRVYDESLVVAQDLQRSDAPLYRLEAIDFGRRMAVEKELEKTESAPQPNAVFDESSNFLIYATFLGIKVINLHTNTVARILGKVESNERYLRVALYQGDQGGKKVRKIPAAAANVNESKEPLTDPTILCCAFKKHRIYMFSRREPEEPEDASQGRDVFNEKPAADELMSVSDIGNSATTSLPENVIMHTTLGDIHMKLYPEECPKTVENFTTHCRNGYYDNHLFHRVIRGFMIQTGDPLGDGTGGQSIWGREFEDEFHKSLRHDRPFTLSMANAGPNTNGSQFFITTVATPWLDNKHTVFGRVVKGMDVVQGIEKVKTDKNDRPYQDVKILNVTVPKS</sequence>
<gene>
    <name evidence="9" type="primary">CYP71</name>
    <name evidence="14" type="ordered locus">At3g44600</name>
    <name evidence="15" type="ORF">F14L2.150</name>
</gene>
<feature type="chain" id="PRO_0000429943" description="Peptidyl-prolyl cis-trans isomerase CYP71">
    <location>
        <begin position="1"/>
        <end position="631"/>
    </location>
</feature>
<feature type="repeat" description="WD 1" evidence="1">
    <location>
        <begin position="68"/>
        <end position="106"/>
    </location>
</feature>
<feature type="repeat" description="WD 2" evidence="1">
    <location>
        <begin position="111"/>
        <end position="150"/>
    </location>
</feature>
<feature type="repeat" description="WD 3" evidence="1">
    <location>
        <begin position="201"/>
        <end position="240"/>
    </location>
</feature>
<feature type="repeat" description="WD 4" evidence="1">
    <location>
        <begin position="257"/>
        <end position="297"/>
    </location>
</feature>
<feature type="domain" description="PPIase cyclophilin-type" evidence="2">
    <location>
        <begin position="474"/>
        <end position="628"/>
    </location>
</feature>
<feature type="region of interest" description="Disordered" evidence="3">
    <location>
        <begin position="26"/>
        <end position="45"/>
    </location>
</feature>
<feature type="strand" evidence="16">
    <location>
        <begin position="477"/>
        <end position="482"/>
    </location>
</feature>
<feature type="strand" evidence="16">
    <location>
        <begin position="485"/>
        <end position="491"/>
    </location>
</feature>
<feature type="turn" evidence="16">
    <location>
        <begin position="493"/>
        <end position="495"/>
    </location>
</feature>
<feature type="helix" evidence="16">
    <location>
        <begin position="497"/>
        <end position="508"/>
    </location>
</feature>
<feature type="turn" evidence="16">
    <location>
        <begin position="509"/>
        <end position="514"/>
    </location>
</feature>
<feature type="strand" evidence="16">
    <location>
        <begin position="519"/>
        <end position="521"/>
    </location>
</feature>
<feature type="turn" evidence="16">
    <location>
        <begin position="522"/>
        <end position="524"/>
    </location>
</feature>
<feature type="strand" evidence="16">
    <location>
        <begin position="525"/>
        <end position="528"/>
    </location>
</feature>
<feature type="strand" evidence="16">
    <location>
        <begin position="533"/>
        <end position="536"/>
    </location>
</feature>
<feature type="strand" evidence="16">
    <location>
        <begin position="558"/>
        <end position="564"/>
    </location>
</feature>
<feature type="strand" evidence="16">
    <location>
        <begin position="576"/>
        <end position="581"/>
    </location>
</feature>
<feature type="helix" evidence="16">
    <location>
        <begin position="584"/>
        <end position="586"/>
    </location>
</feature>
<feature type="turn" evidence="16">
    <location>
        <begin position="587"/>
        <end position="589"/>
    </location>
</feature>
<feature type="strand" evidence="16">
    <location>
        <begin position="592"/>
        <end position="598"/>
    </location>
</feature>
<feature type="helix" evidence="16">
    <location>
        <begin position="600"/>
        <end position="607"/>
    </location>
</feature>
<feature type="strand" evidence="16">
    <location>
        <begin position="617"/>
        <end position="619"/>
    </location>
</feature>
<feature type="strand" evidence="16">
    <location>
        <begin position="622"/>
        <end position="627"/>
    </location>
</feature>
<accession>Q8W4D0</accession>
<accession>Q9LXM7</accession>
<proteinExistence type="evidence at protein level"/>
<keyword id="KW-0002">3D-structure</keyword>
<keyword id="KW-0143">Chaperone</keyword>
<keyword id="KW-0413">Isomerase</keyword>
<keyword id="KW-0539">Nucleus</keyword>
<keyword id="KW-1185">Reference proteome</keyword>
<keyword id="KW-0677">Repeat</keyword>
<keyword id="KW-0697">Rotamase</keyword>
<keyword id="KW-0853">WD repeat</keyword>
<evidence type="ECO:0000255" key="1"/>
<evidence type="ECO:0000255" key="2">
    <source>
        <dbReference type="PROSITE-ProRule" id="PRU00156"/>
    </source>
</evidence>
<evidence type="ECO:0000256" key="3">
    <source>
        <dbReference type="SAM" id="MobiDB-lite"/>
    </source>
</evidence>
<evidence type="ECO:0000269" key="4">
    <source>
    </source>
</evidence>
<evidence type="ECO:0000269" key="5">
    <source>
    </source>
</evidence>
<evidence type="ECO:0000269" key="6">
    <source>
    </source>
</evidence>
<evidence type="ECO:0000269" key="7">
    <source>
    </source>
</evidence>
<evidence type="ECO:0000269" key="8">
    <source>
    </source>
</evidence>
<evidence type="ECO:0000303" key="9">
    <source>
    </source>
</evidence>
<evidence type="ECO:0000303" key="10">
    <source>
    </source>
</evidence>
<evidence type="ECO:0000305" key="11"/>
<evidence type="ECO:0000305" key="12">
    <source>
    </source>
</evidence>
<evidence type="ECO:0000305" key="13">
    <source>
    </source>
</evidence>
<evidence type="ECO:0000312" key="14">
    <source>
        <dbReference type="Araport" id="AT3G44600"/>
    </source>
</evidence>
<evidence type="ECO:0000312" key="15">
    <source>
        <dbReference type="EMBL" id="CAB88542.1"/>
    </source>
</evidence>
<evidence type="ECO:0007829" key="16">
    <source>
        <dbReference type="PDB" id="6LKB"/>
    </source>
</evidence>